<accession>P23829</accession>
<name>RS21_GEOSE</name>
<keyword id="KW-0903">Direct protein sequencing</keyword>
<keyword id="KW-0687">Ribonucleoprotein</keyword>
<keyword id="KW-0689">Ribosomal protein</keyword>
<gene>
    <name type="primary">rpsU</name>
</gene>
<evidence type="ECO:0000269" key="1">
    <source>
    </source>
</evidence>
<evidence type="ECO:0000305" key="2"/>
<reference key="1">
    <citation type="journal article" date="1991" name="Biol. Chem. Hoppe-Seyler">
        <title>The amino-acid sequences of the Bacillus stearothermophilus ribosomal proteins S17 and S21 and their comparison to homologous proteins of other ribosomes.</title>
        <authorList>
            <person name="Herfurth E."/>
            <person name="Hirano H."/>
            <person name="Wittmann-Liebold B."/>
        </authorList>
    </citation>
    <scope>PROTEIN SEQUENCE OF 2-56</scope>
    <source>
        <strain>799</strain>
    </source>
</reference>
<comment type="similarity">
    <text evidence="2">Belongs to the bacterial ribosomal protein bS21 family.</text>
</comment>
<proteinExistence type="evidence at protein level"/>
<protein>
    <recommendedName>
        <fullName evidence="2">Small ribosomal subunit protein bS21</fullName>
    </recommendedName>
    <alternativeName>
        <fullName>30S ribosomal protein S21</fullName>
    </alternativeName>
</protein>
<organism>
    <name type="scientific">Geobacillus stearothermophilus</name>
    <name type="common">Bacillus stearothermophilus</name>
    <dbReference type="NCBI Taxonomy" id="1422"/>
    <lineage>
        <taxon>Bacteria</taxon>
        <taxon>Bacillati</taxon>
        <taxon>Bacillota</taxon>
        <taxon>Bacilli</taxon>
        <taxon>Bacillales</taxon>
        <taxon>Anoxybacillaceae</taxon>
        <taxon>Geobacillus</taxon>
    </lineage>
</organism>
<feature type="initiator methionine" description="Removed" evidence="1">
    <location>
        <position position="1"/>
    </location>
</feature>
<feature type="chain" id="PRO_0000178300" description="Small ribosomal subunit protein bS21">
    <location>
        <begin position="2"/>
        <end position="56"/>
    </location>
</feature>
<sequence length="56" mass="6723">MSKTIVRKNESIDDALRRFKRAVSKTGTLQEVRKREFYEKPSVRRKKKSEAARKRK</sequence>
<dbReference type="PIR" id="S17866">
    <property type="entry name" value="S17866"/>
</dbReference>
<dbReference type="SMR" id="P23829"/>
<dbReference type="GO" id="GO:1990904">
    <property type="term" value="C:ribonucleoprotein complex"/>
    <property type="evidence" value="ECO:0007669"/>
    <property type="project" value="UniProtKB-KW"/>
</dbReference>
<dbReference type="GO" id="GO:0005840">
    <property type="term" value="C:ribosome"/>
    <property type="evidence" value="ECO:0007669"/>
    <property type="project" value="UniProtKB-KW"/>
</dbReference>
<dbReference type="GO" id="GO:0003735">
    <property type="term" value="F:structural constituent of ribosome"/>
    <property type="evidence" value="ECO:0007669"/>
    <property type="project" value="InterPro"/>
</dbReference>
<dbReference type="GO" id="GO:0006412">
    <property type="term" value="P:translation"/>
    <property type="evidence" value="ECO:0007669"/>
    <property type="project" value="UniProtKB-UniRule"/>
</dbReference>
<dbReference type="Gene3D" id="1.20.5.1150">
    <property type="entry name" value="Ribosomal protein S8"/>
    <property type="match status" value="1"/>
</dbReference>
<dbReference type="HAMAP" id="MF_00358">
    <property type="entry name" value="Ribosomal_bS21"/>
    <property type="match status" value="1"/>
</dbReference>
<dbReference type="InterPro" id="IPR001911">
    <property type="entry name" value="Ribosomal_bS21"/>
</dbReference>
<dbReference type="InterPro" id="IPR018278">
    <property type="entry name" value="Ribosomal_bS21_CS"/>
</dbReference>
<dbReference type="InterPro" id="IPR038380">
    <property type="entry name" value="Ribosomal_bS21_sf"/>
</dbReference>
<dbReference type="NCBIfam" id="TIGR00030">
    <property type="entry name" value="S21p"/>
    <property type="match status" value="1"/>
</dbReference>
<dbReference type="PANTHER" id="PTHR21109">
    <property type="entry name" value="MITOCHONDRIAL 28S RIBOSOMAL PROTEIN S21"/>
    <property type="match status" value="1"/>
</dbReference>
<dbReference type="PANTHER" id="PTHR21109:SF22">
    <property type="entry name" value="SMALL RIBOSOMAL SUBUNIT PROTEIN BS21"/>
    <property type="match status" value="1"/>
</dbReference>
<dbReference type="Pfam" id="PF01165">
    <property type="entry name" value="Ribosomal_S21"/>
    <property type="match status" value="1"/>
</dbReference>
<dbReference type="PRINTS" id="PR00976">
    <property type="entry name" value="RIBOSOMALS21"/>
</dbReference>
<dbReference type="PROSITE" id="PS01181">
    <property type="entry name" value="RIBOSOMAL_S21"/>
    <property type="match status" value="1"/>
</dbReference>